<sequence length="51" mass="6027">MEKLTTELHSLSEMDRRHVVSILAEIANGYDDFNDMLIYLEFYPNHKILIS</sequence>
<keyword id="KW-1185">Reference proteome</keyword>
<name>YRHD_ECOLI</name>
<dbReference type="EMBL" id="U00096">
    <property type="protein sequence ID" value="AYC08248.1"/>
    <property type="molecule type" value="Genomic_DNA"/>
</dbReference>
<dbReference type="EnsemblBacteria" id="AYC08248">
    <property type="protein sequence ID" value="AYC08248"/>
    <property type="gene ID" value="b4612"/>
</dbReference>
<dbReference type="InParanoid" id="P58037"/>
<dbReference type="BioCyc" id="EcoCyc:MONOMER0-2826"/>
<dbReference type="PRO" id="PR:P58037"/>
<dbReference type="Proteomes" id="UP000000625">
    <property type="component" value="Chromosome"/>
</dbReference>
<organism>
    <name type="scientific">Escherichia coli (strain K12)</name>
    <dbReference type="NCBI Taxonomy" id="83333"/>
    <lineage>
        <taxon>Bacteria</taxon>
        <taxon>Pseudomonadati</taxon>
        <taxon>Pseudomonadota</taxon>
        <taxon>Gammaproteobacteria</taxon>
        <taxon>Enterobacterales</taxon>
        <taxon>Enterobacteriaceae</taxon>
        <taxon>Escherichia</taxon>
    </lineage>
</organism>
<accession>P58037</accession>
<accession>A0A385XJM5</accession>
<accession>A5A623</accession>
<reference key="1">
    <citation type="journal article" date="1997" name="Science">
        <title>The complete genome sequence of Escherichia coli K-12.</title>
        <authorList>
            <person name="Blattner F.R."/>
            <person name="Plunkett G. III"/>
            <person name="Bloch C.A."/>
            <person name="Perna N.T."/>
            <person name="Burland V."/>
            <person name="Riley M."/>
            <person name="Collado-Vides J."/>
            <person name="Glasner J.D."/>
            <person name="Rode C.K."/>
            <person name="Mayhew G.F."/>
            <person name="Gregor J."/>
            <person name="Davis N.W."/>
            <person name="Kirkpatrick H.A."/>
            <person name="Goeden M.A."/>
            <person name="Rose D.J."/>
            <person name="Mau B."/>
            <person name="Shao Y."/>
        </authorList>
    </citation>
    <scope>NUCLEOTIDE SEQUENCE [LARGE SCALE GENOMIC DNA]</scope>
    <source>
        <strain>K12 / MG1655 / ATCC 47076</strain>
    </source>
</reference>
<reference key="2">
    <citation type="unpublished observations" date="1999-01">
        <authorList>
            <person name="Rudd K.E."/>
        </authorList>
    </citation>
    <scope>IDENTIFICATION</scope>
</reference>
<gene>
    <name type="primary">yrhD</name>
    <name type="ordered locus">b4612</name>
    <name type="ORF">b3445.1</name>
</gene>
<protein>
    <recommendedName>
        <fullName>Protein YrhD</fullName>
    </recommendedName>
</protein>
<feature type="chain" id="PRO_0000169561" description="Protein YrhD">
    <location>
        <begin position="1"/>
        <end position="51"/>
    </location>
</feature>
<proteinExistence type="predicted"/>